<organism>
    <name type="scientific">Shewanella putrefaciens (strain CN-32 / ATCC BAA-453)</name>
    <dbReference type="NCBI Taxonomy" id="319224"/>
    <lineage>
        <taxon>Bacteria</taxon>
        <taxon>Pseudomonadati</taxon>
        <taxon>Pseudomonadota</taxon>
        <taxon>Gammaproteobacteria</taxon>
        <taxon>Alteromonadales</taxon>
        <taxon>Shewanellaceae</taxon>
        <taxon>Shewanella</taxon>
    </lineage>
</organism>
<keyword id="KW-0030">Aminoacyl-tRNA synthetase</keyword>
<keyword id="KW-0067">ATP-binding</keyword>
<keyword id="KW-0963">Cytoplasm</keyword>
<keyword id="KW-0436">Ligase</keyword>
<keyword id="KW-0479">Metal-binding</keyword>
<keyword id="KW-0547">Nucleotide-binding</keyword>
<keyword id="KW-0648">Protein biosynthesis</keyword>
<keyword id="KW-0694">RNA-binding</keyword>
<keyword id="KW-0820">tRNA-binding</keyword>
<keyword id="KW-0862">Zinc</keyword>
<comment type="function">
    <text evidence="1">Catalyzes the attachment of threonine to tRNA(Thr) in a two-step reaction: L-threonine is first activated by ATP to form Thr-AMP and then transferred to the acceptor end of tRNA(Thr). Also edits incorrectly charged L-seryl-tRNA(Thr).</text>
</comment>
<comment type="catalytic activity">
    <reaction evidence="1">
        <text>tRNA(Thr) + L-threonine + ATP = L-threonyl-tRNA(Thr) + AMP + diphosphate + H(+)</text>
        <dbReference type="Rhea" id="RHEA:24624"/>
        <dbReference type="Rhea" id="RHEA-COMP:9670"/>
        <dbReference type="Rhea" id="RHEA-COMP:9704"/>
        <dbReference type="ChEBI" id="CHEBI:15378"/>
        <dbReference type="ChEBI" id="CHEBI:30616"/>
        <dbReference type="ChEBI" id="CHEBI:33019"/>
        <dbReference type="ChEBI" id="CHEBI:57926"/>
        <dbReference type="ChEBI" id="CHEBI:78442"/>
        <dbReference type="ChEBI" id="CHEBI:78534"/>
        <dbReference type="ChEBI" id="CHEBI:456215"/>
        <dbReference type="EC" id="6.1.1.3"/>
    </reaction>
</comment>
<comment type="cofactor">
    <cofactor evidence="1">
        <name>Zn(2+)</name>
        <dbReference type="ChEBI" id="CHEBI:29105"/>
    </cofactor>
    <text evidence="1">Binds 1 zinc ion per subunit.</text>
</comment>
<comment type="subunit">
    <text evidence="1">Homodimer.</text>
</comment>
<comment type="subcellular location">
    <subcellularLocation>
        <location evidence="1">Cytoplasm</location>
    </subcellularLocation>
</comment>
<comment type="similarity">
    <text evidence="1">Belongs to the class-II aminoacyl-tRNA synthetase family.</text>
</comment>
<feature type="chain" id="PRO_1000020506" description="Threonine--tRNA ligase">
    <location>
        <begin position="1"/>
        <end position="642"/>
    </location>
</feature>
<feature type="domain" description="TGS" evidence="2">
    <location>
        <begin position="1"/>
        <end position="61"/>
    </location>
</feature>
<feature type="region of interest" description="Catalytic" evidence="1">
    <location>
        <begin position="243"/>
        <end position="534"/>
    </location>
</feature>
<feature type="binding site" evidence="1">
    <location>
        <position position="334"/>
    </location>
    <ligand>
        <name>Zn(2+)</name>
        <dbReference type="ChEBI" id="CHEBI:29105"/>
    </ligand>
</feature>
<feature type="binding site" evidence="1">
    <location>
        <position position="385"/>
    </location>
    <ligand>
        <name>Zn(2+)</name>
        <dbReference type="ChEBI" id="CHEBI:29105"/>
    </ligand>
</feature>
<feature type="binding site" evidence="1">
    <location>
        <position position="511"/>
    </location>
    <ligand>
        <name>Zn(2+)</name>
        <dbReference type="ChEBI" id="CHEBI:29105"/>
    </ligand>
</feature>
<reference key="1">
    <citation type="submission" date="2007-04" db="EMBL/GenBank/DDBJ databases">
        <title>Complete sequence of Shewanella putrefaciens CN-32.</title>
        <authorList>
            <consortium name="US DOE Joint Genome Institute"/>
            <person name="Copeland A."/>
            <person name="Lucas S."/>
            <person name="Lapidus A."/>
            <person name="Barry K."/>
            <person name="Detter J.C."/>
            <person name="Glavina del Rio T."/>
            <person name="Hammon N."/>
            <person name="Israni S."/>
            <person name="Dalin E."/>
            <person name="Tice H."/>
            <person name="Pitluck S."/>
            <person name="Chain P."/>
            <person name="Malfatti S."/>
            <person name="Shin M."/>
            <person name="Vergez L."/>
            <person name="Schmutz J."/>
            <person name="Larimer F."/>
            <person name="Land M."/>
            <person name="Hauser L."/>
            <person name="Kyrpides N."/>
            <person name="Mikhailova N."/>
            <person name="Romine M.F."/>
            <person name="Fredrickson J."/>
            <person name="Tiedje J."/>
            <person name="Richardson P."/>
        </authorList>
    </citation>
    <scope>NUCLEOTIDE SEQUENCE [LARGE SCALE GENOMIC DNA]</scope>
    <source>
        <strain>CN-32 / ATCC BAA-453</strain>
    </source>
</reference>
<accession>A4Y706</accession>
<proteinExistence type="inferred from homology"/>
<dbReference type="EC" id="6.1.1.3" evidence="1"/>
<dbReference type="EMBL" id="CP000681">
    <property type="protein sequence ID" value="ABP75739.1"/>
    <property type="molecule type" value="Genomic_DNA"/>
</dbReference>
<dbReference type="SMR" id="A4Y706"/>
<dbReference type="STRING" id="319224.Sputcn32_2018"/>
<dbReference type="KEGG" id="spc:Sputcn32_2018"/>
<dbReference type="eggNOG" id="COG0441">
    <property type="taxonomic scope" value="Bacteria"/>
</dbReference>
<dbReference type="HOGENOM" id="CLU_008554_0_1_6"/>
<dbReference type="GO" id="GO:0005829">
    <property type="term" value="C:cytosol"/>
    <property type="evidence" value="ECO:0007669"/>
    <property type="project" value="TreeGrafter"/>
</dbReference>
<dbReference type="GO" id="GO:0005524">
    <property type="term" value="F:ATP binding"/>
    <property type="evidence" value="ECO:0007669"/>
    <property type="project" value="UniProtKB-UniRule"/>
</dbReference>
<dbReference type="GO" id="GO:0046872">
    <property type="term" value="F:metal ion binding"/>
    <property type="evidence" value="ECO:0007669"/>
    <property type="project" value="UniProtKB-KW"/>
</dbReference>
<dbReference type="GO" id="GO:0004829">
    <property type="term" value="F:threonine-tRNA ligase activity"/>
    <property type="evidence" value="ECO:0007669"/>
    <property type="project" value="UniProtKB-UniRule"/>
</dbReference>
<dbReference type="GO" id="GO:0000049">
    <property type="term" value="F:tRNA binding"/>
    <property type="evidence" value="ECO:0007669"/>
    <property type="project" value="UniProtKB-KW"/>
</dbReference>
<dbReference type="GO" id="GO:0006435">
    <property type="term" value="P:threonyl-tRNA aminoacylation"/>
    <property type="evidence" value="ECO:0007669"/>
    <property type="project" value="UniProtKB-UniRule"/>
</dbReference>
<dbReference type="CDD" id="cd01667">
    <property type="entry name" value="TGS_ThrRS"/>
    <property type="match status" value="1"/>
</dbReference>
<dbReference type="CDD" id="cd00860">
    <property type="entry name" value="ThrRS_anticodon"/>
    <property type="match status" value="1"/>
</dbReference>
<dbReference type="CDD" id="cd00771">
    <property type="entry name" value="ThrRS_core"/>
    <property type="match status" value="1"/>
</dbReference>
<dbReference type="FunFam" id="3.10.20.30:FF:000005">
    <property type="entry name" value="Threonine--tRNA ligase"/>
    <property type="match status" value="1"/>
</dbReference>
<dbReference type="FunFam" id="3.30.54.20:FF:000002">
    <property type="entry name" value="Threonine--tRNA ligase"/>
    <property type="match status" value="1"/>
</dbReference>
<dbReference type="FunFam" id="3.30.930.10:FF:000002">
    <property type="entry name" value="Threonine--tRNA ligase"/>
    <property type="match status" value="1"/>
</dbReference>
<dbReference type="FunFam" id="3.40.50.800:FF:000001">
    <property type="entry name" value="Threonine--tRNA ligase"/>
    <property type="match status" value="1"/>
</dbReference>
<dbReference type="FunFam" id="3.30.980.10:FF:000005">
    <property type="entry name" value="Threonyl-tRNA synthetase, mitochondrial"/>
    <property type="match status" value="1"/>
</dbReference>
<dbReference type="Gene3D" id="3.10.20.30">
    <property type="match status" value="1"/>
</dbReference>
<dbReference type="Gene3D" id="3.30.54.20">
    <property type="match status" value="1"/>
</dbReference>
<dbReference type="Gene3D" id="3.40.50.800">
    <property type="entry name" value="Anticodon-binding domain"/>
    <property type="match status" value="1"/>
</dbReference>
<dbReference type="Gene3D" id="3.30.930.10">
    <property type="entry name" value="Bira Bifunctional Protein, Domain 2"/>
    <property type="match status" value="1"/>
</dbReference>
<dbReference type="Gene3D" id="3.30.980.10">
    <property type="entry name" value="Threonyl-trna Synthetase, Chain A, domain 2"/>
    <property type="match status" value="1"/>
</dbReference>
<dbReference type="HAMAP" id="MF_00184">
    <property type="entry name" value="Thr_tRNA_synth"/>
    <property type="match status" value="1"/>
</dbReference>
<dbReference type="InterPro" id="IPR002314">
    <property type="entry name" value="aa-tRNA-synt_IIb"/>
</dbReference>
<dbReference type="InterPro" id="IPR006195">
    <property type="entry name" value="aa-tRNA-synth_II"/>
</dbReference>
<dbReference type="InterPro" id="IPR045864">
    <property type="entry name" value="aa-tRNA-synth_II/BPL/LPL"/>
</dbReference>
<dbReference type="InterPro" id="IPR004154">
    <property type="entry name" value="Anticodon-bd"/>
</dbReference>
<dbReference type="InterPro" id="IPR036621">
    <property type="entry name" value="Anticodon-bd_dom_sf"/>
</dbReference>
<dbReference type="InterPro" id="IPR012675">
    <property type="entry name" value="Beta-grasp_dom_sf"/>
</dbReference>
<dbReference type="InterPro" id="IPR004095">
    <property type="entry name" value="TGS"/>
</dbReference>
<dbReference type="InterPro" id="IPR012676">
    <property type="entry name" value="TGS-like"/>
</dbReference>
<dbReference type="InterPro" id="IPR002320">
    <property type="entry name" value="Thr-tRNA-ligase_IIa"/>
</dbReference>
<dbReference type="InterPro" id="IPR018163">
    <property type="entry name" value="Thr/Ala-tRNA-synth_IIc_edit"/>
</dbReference>
<dbReference type="InterPro" id="IPR047246">
    <property type="entry name" value="ThrRS_anticodon"/>
</dbReference>
<dbReference type="InterPro" id="IPR033728">
    <property type="entry name" value="ThrRS_core"/>
</dbReference>
<dbReference type="InterPro" id="IPR012947">
    <property type="entry name" value="tRNA_SAD"/>
</dbReference>
<dbReference type="NCBIfam" id="TIGR00418">
    <property type="entry name" value="thrS"/>
    <property type="match status" value="1"/>
</dbReference>
<dbReference type="PANTHER" id="PTHR11451:SF44">
    <property type="entry name" value="THREONINE--TRNA LIGASE, CHLOROPLASTIC_MITOCHONDRIAL 2"/>
    <property type="match status" value="1"/>
</dbReference>
<dbReference type="PANTHER" id="PTHR11451">
    <property type="entry name" value="THREONINE-TRNA LIGASE"/>
    <property type="match status" value="1"/>
</dbReference>
<dbReference type="Pfam" id="PF03129">
    <property type="entry name" value="HGTP_anticodon"/>
    <property type="match status" value="1"/>
</dbReference>
<dbReference type="Pfam" id="PF02824">
    <property type="entry name" value="TGS"/>
    <property type="match status" value="1"/>
</dbReference>
<dbReference type="Pfam" id="PF00587">
    <property type="entry name" value="tRNA-synt_2b"/>
    <property type="match status" value="1"/>
</dbReference>
<dbReference type="Pfam" id="PF07973">
    <property type="entry name" value="tRNA_SAD"/>
    <property type="match status" value="1"/>
</dbReference>
<dbReference type="PRINTS" id="PR01047">
    <property type="entry name" value="TRNASYNTHTHR"/>
</dbReference>
<dbReference type="SMART" id="SM00863">
    <property type="entry name" value="tRNA_SAD"/>
    <property type="match status" value="1"/>
</dbReference>
<dbReference type="SUPFAM" id="SSF52954">
    <property type="entry name" value="Class II aaRS ABD-related"/>
    <property type="match status" value="1"/>
</dbReference>
<dbReference type="SUPFAM" id="SSF55681">
    <property type="entry name" value="Class II aaRS and biotin synthetases"/>
    <property type="match status" value="1"/>
</dbReference>
<dbReference type="SUPFAM" id="SSF81271">
    <property type="entry name" value="TGS-like"/>
    <property type="match status" value="1"/>
</dbReference>
<dbReference type="SUPFAM" id="SSF55186">
    <property type="entry name" value="ThrRS/AlaRS common domain"/>
    <property type="match status" value="1"/>
</dbReference>
<dbReference type="PROSITE" id="PS50862">
    <property type="entry name" value="AA_TRNA_LIGASE_II"/>
    <property type="match status" value="1"/>
</dbReference>
<dbReference type="PROSITE" id="PS51880">
    <property type="entry name" value="TGS"/>
    <property type="match status" value="1"/>
</dbReference>
<protein>
    <recommendedName>
        <fullName evidence="1">Threonine--tRNA ligase</fullName>
        <ecNumber evidence="1">6.1.1.3</ecNumber>
    </recommendedName>
    <alternativeName>
        <fullName evidence="1">Threonyl-tRNA synthetase</fullName>
        <shortName evidence="1">ThrRS</shortName>
    </alternativeName>
</protein>
<name>SYT_SHEPC</name>
<evidence type="ECO:0000255" key="1">
    <source>
        <dbReference type="HAMAP-Rule" id="MF_00184"/>
    </source>
</evidence>
<evidence type="ECO:0000255" key="2">
    <source>
        <dbReference type="PROSITE-ProRule" id="PRU01228"/>
    </source>
</evidence>
<gene>
    <name evidence="1" type="primary">thrS</name>
    <name type="ordered locus">Sputcn32_2018</name>
</gene>
<sequence>MPVITLPDGSKREFAHAVSTLDVAADIGPGLAKACIAGRVNGELKDACDLIETDAELSIITAKDEEGVEILRHSCAHLLGHAIKQMWPETKMAIGPVIDNGFYYDIDLEHKLTQDDIEALEKRMLQLAKTNYDVVKRVVSWQEARDTFAARGEEYKIAILDENISKDATPALYHHEEYTDMCRGPHVPNMRFCQHFKLMSIAGAYWRGNSENKMLQRIYGTAWADKKALSTHLTRLEEAAKRDHRKIGKQLDLYHMQEEAPGMVFWHNDGWSIFLELERFIRRKLNQYTYQEVKGPLMMDRVLWERSGHWDKYSEAMFTTSSENREYAIKPMNCPGHVQIFNQGLKSYRDLPLRMAEFGCCHRNEPSGSLHGLMRVRGFTQDDAHIFCTDDQVQEEVSACIQMVYDTYSTFGFENIVVKLSTRPEKRIGDDAMWDRAEEALKQALRANNIEFTLLPGEGAFYGPKIEFTLHDCLDRAWQCGTVQLDYALPSRLGATYVAEDNSRQTPVMIHRAILGSLERFLGILIEEYAGRFPTWLAPMQVVVMNITDKQADYVQEIVKFFKEQGIRASFDLRNEKIGFKIREHTLRRVPYLLVVGDQEMENKEVAVRTRDGIDLGKMRLEDFATKIHQQISLRSLKLLEE</sequence>